<protein>
    <recommendedName>
        <fullName evidence="5">UDP-glucuronosyltransferase 1A5</fullName>
        <shortName>UGT1A5</shortName>
        <ecNumber evidence="4">2.4.1.17</ecNumber>
    </recommendedName>
    <alternativeName>
        <fullName>UDP-glucuronosyltransferase 1-5</fullName>
        <shortName>UDPGT 1-5</shortName>
        <shortName>UGT1*5</shortName>
        <shortName>UGT1-05</shortName>
        <shortName>UGT1.5</shortName>
    </alternativeName>
    <alternativeName>
        <fullName>UDP-glucuronosyltransferase 1-E</fullName>
        <shortName>UGT-1E</shortName>
        <shortName>UGT1E</shortName>
    </alternativeName>
</protein>
<name>UD15_HUMAN</name>
<sequence>MATGLQVPLPQLATGLLLLLSVQPWAESGKVLVVPTDGSHWLSMREALRDLHARGHQVVVLTLEVNMYIKEENFFTLTTYAISWTQDEFDRLLLGHTQSFFETEHLLMKFSRRMAIMNNMSLIIHRSCVELLHNEALIRHLHATSFDVVLTDPFHLCAAVLAKYLSIPAVFFLRNIPCDLDFKGTQCPNPSSYIPRLLTTNSDHMTFLQRVKNMLYPLALSYLCHAVSAPYASLASELFQREVSVVDLVSHASVWLFRGDFVMDYPRPIMPNMVFIGGINCANGKPLSQEFEAYINASGEHGIVVFSLGSMVSEIPEKKAMAIADALGKIPQTVLWRYTGTRPSNLANNTILVKWLPQNDLLGHPMTRAFITHAGSHGVYESICNGVPMVMMPLFGDQMDNAKRMETKGAGVTLNVLEMTSEDLENALKAVINDKSYKENIMRLSSLHKDRPVEPLDLAVFWVEFVMRHKGAPHLRPAAHDLTWYQYHSLDVIGFLLAVVLTVAFITFKCCAYGYRKCLGKKGRVKKAHKSKTH</sequence>
<accession>P35504</accession>
<accession>B8K294</accession>
<gene>
    <name evidence="9" type="primary">UGT1A5</name>
    <name type="synonym">GNT1</name>
    <name type="synonym">UGT1</name>
</gene>
<proteinExistence type="evidence at protein level"/>
<dbReference type="EC" id="2.4.1.17" evidence="4"/>
<dbReference type="EMBL" id="M84129">
    <property type="protein sequence ID" value="AAA61250.1"/>
    <property type="molecule type" value="Genomic_DNA"/>
</dbReference>
<dbReference type="EMBL" id="M84124">
    <property type="protein sequence ID" value="AAA61247.1"/>
    <property type="status" value="ALT_SEQ"/>
    <property type="molecule type" value="Genomic_DNA"/>
</dbReference>
<dbReference type="EMBL" id="M84122">
    <property type="protein sequence ID" value="AAA61247.1"/>
    <property type="status" value="JOINED"/>
    <property type="molecule type" value="Genomic_DNA"/>
</dbReference>
<dbReference type="EMBL" id="M84123">
    <property type="protein sequence ID" value="AAA61247.1"/>
    <property type="status" value="JOINED"/>
    <property type="molecule type" value="Genomic_DNA"/>
</dbReference>
<dbReference type="EMBL" id="AF297093">
    <property type="protein sequence ID" value="AAG30421.1"/>
    <property type="molecule type" value="Genomic_DNA"/>
</dbReference>
<dbReference type="EMBL" id="AC006985">
    <property type="status" value="NOT_ANNOTATED_CDS"/>
    <property type="molecule type" value="Genomic_DNA"/>
</dbReference>
<dbReference type="EMBL" id="AC114812">
    <property type="status" value="NOT_ANNOTATED_CDS"/>
    <property type="molecule type" value="Genomic_DNA"/>
</dbReference>
<dbReference type="EMBL" id="DQ383514">
    <property type="protein sequence ID" value="ABD42927.1"/>
    <property type="molecule type" value="mRNA"/>
</dbReference>
<dbReference type="CCDS" id="CCDS33404.1">
    <molecule id="P35504-1"/>
</dbReference>
<dbReference type="PIR" id="B42586">
    <property type="entry name" value="B42586"/>
</dbReference>
<dbReference type="RefSeq" id="NP_061951.1">
    <molecule id="P35504-1"/>
    <property type="nucleotide sequence ID" value="NM_019078.2"/>
</dbReference>
<dbReference type="SMR" id="P35504"/>
<dbReference type="BioGRID" id="120057">
    <property type="interactions" value="19"/>
</dbReference>
<dbReference type="FunCoup" id="P35504">
    <property type="interactions" value="416"/>
</dbReference>
<dbReference type="IntAct" id="P35504">
    <property type="interactions" value="13"/>
</dbReference>
<dbReference type="STRING" id="9606.ENSP00000362513"/>
<dbReference type="ChEMBL" id="CHEMBL4523985"/>
<dbReference type="DrugCentral" id="P35504"/>
<dbReference type="CAZy" id="GT1">
    <property type="family name" value="Glycosyltransferase Family 1"/>
</dbReference>
<dbReference type="GlyConnect" id="1877">
    <property type="glycosylation" value="2 N-Linked glycans (1 site)"/>
</dbReference>
<dbReference type="GlyCosmos" id="P35504">
    <property type="glycosylation" value="3 sites, 2 glycans"/>
</dbReference>
<dbReference type="GlyGen" id="P35504">
    <property type="glycosylation" value="3 sites, 2 N-linked glycans (1 site)"/>
</dbReference>
<dbReference type="iPTMnet" id="P35504"/>
<dbReference type="PhosphoSitePlus" id="P35504"/>
<dbReference type="BioMuta" id="UGT1A5"/>
<dbReference type="DMDM" id="549153"/>
<dbReference type="jPOST" id="P35504"/>
<dbReference type="MassIVE" id="P35504"/>
<dbReference type="PaxDb" id="9606-ENSP00000362513"/>
<dbReference type="PeptideAtlas" id="P35504"/>
<dbReference type="Antibodypedia" id="47694">
    <property type="antibodies" value="27 antibodies from 13 providers"/>
</dbReference>
<dbReference type="DNASU" id="54579"/>
<dbReference type="Ensembl" id="ENST00000373414.4">
    <molecule id="P35504-1"/>
    <property type="protein sequence ID" value="ENSP00000362513.3"/>
    <property type="gene ID" value="ENSG00000288705.1"/>
</dbReference>
<dbReference type="GeneID" id="54579"/>
<dbReference type="KEGG" id="hsa:54579"/>
<dbReference type="MANE-Select" id="ENST00000373414.4">
    <property type="protein sequence ID" value="ENSP00000362513.3"/>
    <property type="RefSeq nucleotide sequence ID" value="NM_019078.2"/>
    <property type="RefSeq protein sequence ID" value="NP_061951.1"/>
</dbReference>
<dbReference type="AGR" id="HGNC:12537"/>
<dbReference type="CTD" id="54579"/>
<dbReference type="DisGeNET" id="54579"/>
<dbReference type="GeneCards" id="UGT1A5"/>
<dbReference type="HGNC" id="HGNC:12537">
    <property type="gene designation" value="UGT1A5"/>
</dbReference>
<dbReference type="HPA" id="ENSG00000288705">
    <property type="expression patterns" value="Tissue enhanced (gallbladder, intestine, liver)"/>
</dbReference>
<dbReference type="MalaCards" id="UGT1A5"/>
<dbReference type="MIM" id="191740">
    <property type="type" value="gene"/>
</dbReference>
<dbReference type="MIM" id="606430">
    <property type="type" value="gene"/>
</dbReference>
<dbReference type="neXtProt" id="NX_P35504"/>
<dbReference type="PharmGKB" id="PA37180"/>
<dbReference type="VEuPathDB" id="HostDB:ENSG00000240224"/>
<dbReference type="eggNOG" id="KOG1192">
    <property type="taxonomic scope" value="Eukaryota"/>
</dbReference>
<dbReference type="GeneTree" id="ENSGT00940000162976"/>
<dbReference type="HOGENOM" id="CLU_012949_1_3_1"/>
<dbReference type="InParanoid" id="P35504"/>
<dbReference type="OMA" id="KYFCHIS"/>
<dbReference type="OrthoDB" id="9475613at2759"/>
<dbReference type="PAN-GO" id="P35504">
    <property type="GO annotations" value="3 GO annotations based on evolutionary models"/>
</dbReference>
<dbReference type="PhylomeDB" id="P35504"/>
<dbReference type="TreeFam" id="TF315472"/>
<dbReference type="BRENDA" id="2.4.1.17">
    <property type="organism ID" value="2681"/>
</dbReference>
<dbReference type="PathwayCommons" id="P35504"/>
<dbReference type="Reactome" id="R-HSA-156588">
    <property type="pathway name" value="Glucuronidation"/>
</dbReference>
<dbReference type="Reactome" id="R-HSA-9749641">
    <property type="pathway name" value="Aspirin ADME"/>
</dbReference>
<dbReference type="BioGRID-ORCS" id="54579">
    <property type="hits" value="57 hits in 970 CRISPR screens"/>
</dbReference>
<dbReference type="GeneWiki" id="UGT1A5"/>
<dbReference type="GenomeRNAi" id="54579"/>
<dbReference type="Pharos" id="P35504">
    <property type="development level" value="Tdark"/>
</dbReference>
<dbReference type="PRO" id="PR:P35504"/>
<dbReference type="Proteomes" id="UP000005640">
    <property type="component" value="Chromosome 2"/>
</dbReference>
<dbReference type="RNAct" id="P35504">
    <property type="molecule type" value="protein"/>
</dbReference>
<dbReference type="ExpressionAtlas" id="P35504">
    <property type="expression patterns" value="baseline"/>
</dbReference>
<dbReference type="GO" id="GO:0005783">
    <property type="term" value="C:endoplasmic reticulum"/>
    <property type="evidence" value="ECO:0000318"/>
    <property type="project" value="GO_Central"/>
</dbReference>
<dbReference type="GO" id="GO:0005789">
    <property type="term" value="C:endoplasmic reticulum membrane"/>
    <property type="evidence" value="ECO:0007669"/>
    <property type="project" value="UniProtKB-SubCell"/>
</dbReference>
<dbReference type="GO" id="GO:0019899">
    <property type="term" value="F:enzyme binding"/>
    <property type="evidence" value="ECO:0000318"/>
    <property type="project" value="GO_Central"/>
</dbReference>
<dbReference type="GO" id="GO:0015020">
    <property type="term" value="F:glucuronosyltransferase activity"/>
    <property type="evidence" value="ECO:0007669"/>
    <property type="project" value="UniProtKB-EC"/>
</dbReference>
<dbReference type="GO" id="GO:0046982">
    <property type="term" value="F:protein heterodimerization activity"/>
    <property type="evidence" value="ECO:0007669"/>
    <property type="project" value="UniProtKB-ARBA"/>
</dbReference>
<dbReference type="GO" id="GO:0042803">
    <property type="term" value="F:protein homodimerization activity"/>
    <property type="evidence" value="ECO:0007669"/>
    <property type="project" value="UniProtKB-ARBA"/>
</dbReference>
<dbReference type="CDD" id="cd03784">
    <property type="entry name" value="GT1_Gtf-like"/>
    <property type="match status" value="1"/>
</dbReference>
<dbReference type="FunFam" id="3.40.50.2000:FF:000001">
    <property type="entry name" value="UDP-glucuronosyltransferase"/>
    <property type="match status" value="1"/>
</dbReference>
<dbReference type="FunFam" id="3.40.50.2000:FF:000066">
    <property type="entry name" value="UDP-glucuronosyltransferase 1-1"/>
    <property type="match status" value="1"/>
</dbReference>
<dbReference type="Gene3D" id="3.40.50.2000">
    <property type="entry name" value="Glycogen Phosphorylase B"/>
    <property type="match status" value="2"/>
</dbReference>
<dbReference type="InterPro" id="IPR050271">
    <property type="entry name" value="UDP-glycosyltransferase"/>
</dbReference>
<dbReference type="InterPro" id="IPR002213">
    <property type="entry name" value="UDP_glucos_trans"/>
</dbReference>
<dbReference type="InterPro" id="IPR035595">
    <property type="entry name" value="UDP_glycos_trans_CS"/>
</dbReference>
<dbReference type="PANTHER" id="PTHR48043">
    <property type="entry name" value="EG:EG0003.4 PROTEIN-RELATED"/>
    <property type="match status" value="1"/>
</dbReference>
<dbReference type="PANTHER" id="PTHR48043:SF161">
    <property type="entry name" value="UDP GLUCURONOSYLTRANSFERASE FAMILY 1 MEMBER A1"/>
    <property type="match status" value="1"/>
</dbReference>
<dbReference type="Pfam" id="PF00201">
    <property type="entry name" value="UDPGT"/>
    <property type="match status" value="1"/>
</dbReference>
<dbReference type="SUPFAM" id="SSF53756">
    <property type="entry name" value="UDP-Glycosyltransferase/glycogen phosphorylase"/>
    <property type="match status" value="1"/>
</dbReference>
<dbReference type="PROSITE" id="PS00375">
    <property type="entry name" value="UDPGT"/>
    <property type="match status" value="1"/>
</dbReference>
<keyword id="KW-0025">Alternative splicing</keyword>
<keyword id="KW-0256">Endoplasmic reticulum</keyword>
<keyword id="KW-0325">Glycoprotein</keyword>
<keyword id="KW-0328">Glycosyltransferase</keyword>
<keyword id="KW-0472">Membrane</keyword>
<keyword id="KW-1267">Proteomics identification</keyword>
<keyword id="KW-1185">Reference proteome</keyword>
<keyword id="KW-0732">Signal</keyword>
<keyword id="KW-0808">Transferase</keyword>
<keyword id="KW-0812">Transmembrane</keyword>
<keyword id="KW-1133">Transmembrane helix</keyword>
<comment type="function">
    <molecule>Isoform 1</molecule>
    <text evidence="4">UDP-glucuronosyltransferase (UGT) that catalyzes phase II biotransformation reactions in which lipophilic substrates are conjugated with glucuronic acid to increase the metabolite's water solubility, thereby facilitating excretion into either the urine or bile (PubMed:18674515). Essential for the elimination and detoxification of drugs, xenobiotics and endogenous compounds (PubMed:18674515). Involved in the glucuronidation of the AGTR1 angiotensin receptor antagonist zolarsatan, a drug which can inhibit the effect of angiotensin II (PubMed:18674515).</text>
</comment>
<comment type="function">
    <molecule>Isoform 2</molecule>
    <text evidence="3">Lacks UGT glucuronidation activity but acts as a negative regulator of isoform 1.</text>
</comment>
<comment type="catalytic activity">
    <reaction evidence="4">
        <text>glucuronate acceptor + UDP-alpha-D-glucuronate = acceptor beta-D-glucuronoside + UDP + H(+)</text>
        <dbReference type="Rhea" id="RHEA:21032"/>
        <dbReference type="ChEBI" id="CHEBI:15378"/>
        <dbReference type="ChEBI" id="CHEBI:58052"/>
        <dbReference type="ChEBI" id="CHEBI:58223"/>
        <dbReference type="ChEBI" id="CHEBI:132367"/>
        <dbReference type="ChEBI" id="CHEBI:132368"/>
        <dbReference type="EC" id="2.4.1.17"/>
    </reaction>
    <physiologicalReaction direction="left-to-right" evidence="8">
        <dbReference type="Rhea" id="RHEA:21033"/>
    </physiologicalReaction>
</comment>
<comment type="catalytic activity">
    <reaction evidence="4">
        <text>zolasartan + UDP-alpha-D-glucuronate = zolarsartan-1-N-beta-D-glucuronide + UDP</text>
        <dbReference type="Rhea" id="RHEA:63744"/>
        <dbReference type="ChEBI" id="CHEBI:58052"/>
        <dbReference type="ChEBI" id="CHEBI:58223"/>
        <dbReference type="ChEBI" id="CHEBI:149524"/>
        <dbReference type="ChEBI" id="CHEBI:149527"/>
    </reaction>
    <physiologicalReaction direction="left-to-right" evidence="8">
        <dbReference type="Rhea" id="RHEA:63745"/>
    </physiologicalReaction>
</comment>
<comment type="subunit">
    <text evidence="1">Homodimer (By similarity). Homooligomer (By similarity). Interacts with UGT1A1, UGT1A3, UGT1A4, UGT1A6, UGT1A7, UGT1A8, UGT1A9 and UGT1A10 to form heterodimers (By similarity). Isoform 1 interacts with isoform 2/i2 suggesting that oligomerization is involved in negative regulation of transferase activity by isoform 2. Isoform 1 also interacts with respective i2 isoforms of UGT1A1, UGT1A3, UGT1A4, UGT1A6, UGT1A7, UGT1A8, UGT1A9 and UGT1A10 (By similarity).</text>
</comment>
<comment type="subcellular location">
    <subcellularLocation>
        <location evidence="1">Endoplasmic reticulum membrane</location>
        <topology evidence="2">Single-pass membrane protein</topology>
    </subcellularLocation>
</comment>
<comment type="alternative products">
    <event type="alternative splicing"/>
    <isoform>
        <id>P35504-1</id>
        <name>1</name>
        <name evidence="5">i1</name>
        <sequence type="displayed"/>
    </isoform>
    <isoform>
        <id>P35504-2</id>
        <name>2</name>
        <name evidence="5">i2</name>
        <name>UGT1A5s</name>
        <sequence type="described" ref="VSP_053961"/>
    </isoform>
</comment>
<comment type="tissue specificity">
    <text evidence="3">Isoform 1 and isoform 2 are expressed in colon and small intestine. Neither isoform is expressed in liver, kidney or esophagus.</text>
</comment>
<comment type="miscellaneous">
    <text evidence="3">UGT1A5 isoform is part of the UGT1A complex locus which displays alternative use of promoters, first exons and terminal exons. The locus is defined by 13 first exons, which are alternatively spliced to 3 other common exons and 2 alternative terminal exons 5. From the 27 possible mRNA isoforms, 9 produce functionally active polypeptides (UGT1A1, 1A3, 1A4, 1A5, 1A6, 1A7, 1A8, 1A9 and 1A10) called isoforms 1 (i1). Use of an alternative exon 5 (5b) as terminal exon is leading to 9 additional alternatively spliced products termed isoforms i2 and which lack transferase activity.</text>
</comment>
<comment type="similarity">
    <text evidence="7">Belongs to the UDP-glycosyltransferase family.</text>
</comment>
<feature type="signal peptide" evidence="2">
    <location>
        <begin position="1"/>
        <end position="28"/>
    </location>
</feature>
<feature type="chain" id="PRO_0000036004" description="UDP-glucuronosyltransferase 1A5">
    <location>
        <begin position="29"/>
        <end position="534"/>
    </location>
</feature>
<feature type="transmembrane region" description="Helical" evidence="2">
    <location>
        <begin position="492"/>
        <end position="508"/>
    </location>
</feature>
<feature type="glycosylation site" description="N-linked (GlcNAc...) asparagine" evidence="2">
    <location>
        <position position="119"/>
    </location>
</feature>
<feature type="glycosylation site" description="N-linked (GlcNAc...) asparagine" evidence="2">
    <location>
        <position position="296"/>
    </location>
</feature>
<feature type="glycosylation site" description="N-linked (GlcNAc...) asparagine" evidence="2">
    <location>
        <position position="348"/>
    </location>
</feature>
<feature type="splice variant" id="VSP_053961" description="In isoform 2." evidence="6">
    <original>SYKENIMRLSSLHKDRPVEPLDLAVFWVEFVMRHKGAPHLRPAAHDLTWYQYHSLDVIGFLLAVVLTVAFITFKCCAYGYRKCLGKKGRVKKAHKSKTH</original>
    <variation>RKKQQSGRQM</variation>
    <location>
        <begin position="436"/>
        <end position="534"/>
    </location>
</feature>
<feature type="sequence variant" id="VAR_052455" description="In dbSNP:rs3755323.">
    <original>L</original>
    <variation>S</variation>
    <location>
        <position position="48"/>
    </location>
</feature>
<feature type="sequence variant" id="VAR_059845" description="In dbSNP:rs3755322.">
    <original>D</original>
    <variation>E</variation>
    <location>
        <position position="50"/>
    </location>
</feature>
<feature type="sequence variant" id="VAR_052456" description="In dbSNP:rs3755321.">
    <original>L</original>
    <variation>P</variation>
    <location>
        <position position="63"/>
    </location>
</feature>
<feature type="sequence variant" id="VAR_059846" description="In dbSNP:rs3755320.">
    <original>H</original>
    <variation>N</variation>
    <location>
        <position position="142"/>
    </location>
</feature>
<feature type="sequence variant" id="VAR_052457" description="In dbSNP:rs28946885.">
    <original>T</original>
    <variation>S</variation>
    <location>
        <position position="144"/>
    </location>
</feature>
<feature type="sequence variant" id="VAR_052458" description="In dbSNP:rs12475068.">
    <original>A</original>
    <variation>G</variation>
    <location>
        <position position="158"/>
    </location>
</feature>
<feature type="sequence variant" id="VAR_052459" description="In dbSNP:rs17862867.">
    <original>H</original>
    <variation>Y</variation>
    <location>
        <position position="225"/>
    </location>
</feature>
<feature type="sequence variant" id="VAR_052460" description="In dbSNP:rs17862868.">
    <original>V</original>
    <variation>L</variation>
    <location>
        <position position="249"/>
    </location>
</feature>
<feature type="sequence variant" id="VAR_052461" description="In dbSNP:rs3892170.">
    <original>G</original>
    <variation>R</variation>
    <location>
        <position position="259"/>
    </location>
</feature>
<reference key="1">
    <citation type="journal article" date="1992" name="J. Biol. Chem.">
        <title>A novel complex locus UGT1 encodes human bilirubin, phenol, and other UDP-glucuronosyltransferase isozymes with identical carboxyl termini.</title>
        <authorList>
            <person name="Ritter J.K."/>
            <person name="Chen F."/>
            <person name="Sheen Y.Y."/>
            <person name="Tran H.M."/>
            <person name="Kimura S."/>
            <person name="Yeatman M.T."/>
            <person name="Owens I.S."/>
        </authorList>
    </citation>
    <scope>NUCLEOTIDE SEQUENCE [GENOMIC DNA]</scope>
</reference>
<reference key="2">
    <citation type="journal article" date="2001" name="Pharmacogenetics">
        <title>Thirteen UDP-glucuronosyltransferase genes are encoded at the human UGT1 gene complex locus.</title>
        <authorList>
            <person name="Gong Q.H."/>
            <person name="Cho J.W."/>
            <person name="Huang T."/>
            <person name="Potter C."/>
            <person name="Gholami N."/>
            <person name="Basu N.K."/>
            <person name="Kubota S."/>
            <person name="Carvalho S."/>
            <person name="Pennington M.W."/>
            <person name="Owens I.S."/>
            <person name="Popescu N.C."/>
        </authorList>
    </citation>
    <scope>NUCLEOTIDE SEQUENCE [GENOMIC DNA]</scope>
</reference>
<reference key="3">
    <citation type="journal article" date="2005" name="Nature">
        <title>Generation and annotation of the DNA sequences of human chromosomes 2 and 4.</title>
        <authorList>
            <person name="Hillier L.W."/>
            <person name="Graves T.A."/>
            <person name="Fulton R.S."/>
            <person name="Fulton L.A."/>
            <person name="Pepin K.H."/>
            <person name="Minx P."/>
            <person name="Wagner-McPherson C."/>
            <person name="Layman D."/>
            <person name="Wylie K."/>
            <person name="Sekhon M."/>
            <person name="Becker M.C."/>
            <person name="Fewell G.A."/>
            <person name="Delehaunty K.D."/>
            <person name="Miner T.L."/>
            <person name="Nash W.E."/>
            <person name="Kremitzki C."/>
            <person name="Oddy L."/>
            <person name="Du H."/>
            <person name="Sun H."/>
            <person name="Bradshaw-Cordum H."/>
            <person name="Ali J."/>
            <person name="Carter J."/>
            <person name="Cordes M."/>
            <person name="Harris A."/>
            <person name="Isak A."/>
            <person name="van Brunt A."/>
            <person name="Nguyen C."/>
            <person name="Du F."/>
            <person name="Courtney L."/>
            <person name="Kalicki J."/>
            <person name="Ozersky P."/>
            <person name="Abbott S."/>
            <person name="Armstrong J."/>
            <person name="Belter E.A."/>
            <person name="Caruso L."/>
            <person name="Cedroni M."/>
            <person name="Cotton M."/>
            <person name="Davidson T."/>
            <person name="Desai A."/>
            <person name="Elliott G."/>
            <person name="Erb T."/>
            <person name="Fronick C."/>
            <person name="Gaige T."/>
            <person name="Haakenson W."/>
            <person name="Haglund K."/>
            <person name="Holmes A."/>
            <person name="Harkins R."/>
            <person name="Kim K."/>
            <person name="Kruchowski S.S."/>
            <person name="Strong C.M."/>
            <person name="Grewal N."/>
            <person name="Goyea E."/>
            <person name="Hou S."/>
            <person name="Levy A."/>
            <person name="Martinka S."/>
            <person name="Mead K."/>
            <person name="McLellan M.D."/>
            <person name="Meyer R."/>
            <person name="Randall-Maher J."/>
            <person name="Tomlinson C."/>
            <person name="Dauphin-Kohlberg S."/>
            <person name="Kozlowicz-Reilly A."/>
            <person name="Shah N."/>
            <person name="Swearengen-Shahid S."/>
            <person name="Snider J."/>
            <person name="Strong J.T."/>
            <person name="Thompson J."/>
            <person name="Yoakum M."/>
            <person name="Leonard S."/>
            <person name="Pearman C."/>
            <person name="Trani L."/>
            <person name="Radionenko M."/>
            <person name="Waligorski J.E."/>
            <person name="Wang C."/>
            <person name="Rock S.M."/>
            <person name="Tin-Wollam A.-M."/>
            <person name="Maupin R."/>
            <person name="Latreille P."/>
            <person name="Wendl M.C."/>
            <person name="Yang S.-P."/>
            <person name="Pohl C."/>
            <person name="Wallis J.W."/>
            <person name="Spieth J."/>
            <person name="Bieri T.A."/>
            <person name="Berkowicz N."/>
            <person name="Nelson J.O."/>
            <person name="Osborne J."/>
            <person name="Ding L."/>
            <person name="Meyer R."/>
            <person name="Sabo A."/>
            <person name="Shotland Y."/>
            <person name="Sinha P."/>
            <person name="Wohldmann P.E."/>
            <person name="Cook L.L."/>
            <person name="Hickenbotham M.T."/>
            <person name="Eldred J."/>
            <person name="Williams D."/>
            <person name="Jones T.A."/>
            <person name="She X."/>
            <person name="Ciccarelli F.D."/>
            <person name="Izaurralde E."/>
            <person name="Taylor J."/>
            <person name="Schmutz J."/>
            <person name="Myers R.M."/>
            <person name="Cox D.R."/>
            <person name="Huang X."/>
            <person name="McPherson J.D."/>
            <person name="Mardis E.R."/>
            <person name="Clifton S.W."/>
            <person name="Warren W.C."/>
            <person name="Chinwalla A.T."/>
            <person name="Eddy S.R."/>
            <person name="Marra M.A."/>
            <person name="Ovcharenko I."/>
            <person name="Furey T.S."/>
            <person name="Miller W."/>
            <person name="Eichler E.E."/>
            <person name="Bork P."/>
            <person name="Suyama M."/>
            <person name="Torrents D."/>
            <person name="Waterston R.H."/>
            <person name="Wilson R.K."/>
        </authorList>
    </citation>
    <scope>NUCLEOTIDE SEQUENCE [LARGE SCALE GENOMIC DNA]</scope>
</reference>
<reference key="4">
    <citation type="submission" date="2006-01" db="EMBL/GenBank/DDBJ databases">
        <authorList>
            <person name="Guillemette C."/>
            <person name="Levesque E."/>
            <person name="Girard H."/>
            <person name="Bernard O."/>
        </authorList>
    </citation>
    <scope>NUCLEOTIDE SEQUENCE [MRNA] OF 98-534 (ISOFORM 2)</scope>
</reference>
<reference key="5">
    <citation type="journal article" date="2007" name="Pharmacogenet. Genomics">
        <title>Genetic diversity at the UGT1 locus is amplified by a novel 3' alternative splicing mechanism leading to nine additional UGT1A proteins that act as regulators of glucuronidation activity.</title>
        <authorList>
            <person name="Girard H."/>
            <person name="Levesque E."/>
            <person name="Bellemare J."/>
            <person name="Journault K."/>
            <person name="Caillier B."/>
            <person name="Guillemette C."/>
        </authorList>
    </citation>
    <scope>FUNCTION (ISOFORM 2)</scope>
    <scope>ALTERNATIVE SPLICING</scope>
    <scope>TISSUE SPECIFICITY</scope>
</reference>
<reference key="6">
    <citation type="journal article" date="2008" name="Biochem. Pharmacol.">
        <title>The human UDP-glucuronosyltransferase UGT1A3 is highly selective towards N2 in the tetrazole ring of losartan, candesartan, and zolarsartan.</title>
        <authorList>
            <person name="Alonen A."/>
            <person name="Finel M."/>
            <person name="Kostiainen R."/>
        </authorList>
    </citation>
    <scope>FUNCTION (ISOFORM 1)</scope>
    <scope>CATALYTIC ACTIVITY</scope>
</reference>
<organism>
    <name type="scientific">Homo sapiens</name>
    <name type="common">Human</name>
    <dbReference type="NCBI Taxonomy" id="9606"/>
    <lineage>
        <taxon>Eukaryota</taxon>
        <taxon>Metazoa</taxon>
        <taxon>Chordata</taxon>
        <taxon>Craniata</taxon>
        <taxon>Vertebrata</taxon>
        <taxon>Euteleostomi</taxon>
        <taxon>Mammalia</taxon>
        <taxon>Eutheria</taxon>
        <taxon>Euarchontoglires</taxon>
        <taxon>Primates</taxon>
        <taxon>Haplorrhini</taxon>
        <taxon>Catarrhini</taxon>
        <taxon>Hominidae</taxon>
        <taxon>Homo</taxon>
    </lineage>
</organism>
<evidence type="ECO:0000250" key="1">
    <source>
        <dbReference type="UniProtKB" id="P22309"/>
    </source>
</evidence>
<evidence type="ECO:0000255" key="2"/>
<evidence type="ECO:0000269" key="3">
    <source>
    </source>
</evidence>
<evidence type="ECO:0000269" key="4">
    <source>
    </source>
</evidence>
<evidence type="ECO:0000303" key="5">
    <source>
    </source>
</evidence>
<evidence type="ECO:0000303" key="6">
    <source ref="4"/>
</evidence>
<evidence type="ECO:0000305" key="7"/>
<evidence type="ECO:0000305" key="8">
    <source>
    </source>
</evidence>
<evidence type="ECO:0000312" key="9">
    <source>
        <dbReference type="HGNC" id="HGNC:12537"/>
    </source>
</evidence>